<organism>
    <name type="scientific">Thiocapsa roseopersicina</name>
    <dbReference type="NCBI Taxonomy" id="1058"/>
    <lineage>
        <taxon>Bacteria</taxon>
        <taxon>Pseudomonadati</taxon>
        <taxon>Pseudomonadota</taxon>
        <taxon>Gammaproteobacteria</taxon>
        <taxon>Chromatiales</taxon>
        <taxon>Chromatiaceae</taxon>
        <taxon>Thiocapsa</taxon>
    </lineage>
</organism>
<gene>
    <name type="primary">hisC</name>
</gene>
<proteinExistence type="inferred from homology"/>
<sequence length="189" mass="20739">MIDLITQLIRPDIRALSAYHVPDPAGLIKLDAMENPYGWPDTLKAEWLEGMHDLALNRYPDPQGTAVQAALRQAMGIPSDMGLLLGNGSDELIQMLAIAVAQPGRKVLSLDPGFVMYRMIACFAGMDYVGVPLRSDDFSIDLPVMLDAIEREQPALIYLAYPNNPTGNRFDSDDMVRIIEAAPGLVIVD</sequence>
<reference key="1">
    <citation type="submission" date="2000-02" db="EMBL/GenBank/DDBJ databases">
        <title>Genes for putative enzymes of histidine biosynthesis from the phototrophic sulfur bacterium Thiocapsa roseopersicina.</title>
        <authorList>
            <person name="Milles J."/>
            <person name="Kappler U."/>
            <person name="Truper H.G."/>
            <person name="Dahl C."/>
        </authorList>
    </citation>
    <scope>NUCLEOTIDE SEQUENCE [GENOMIC DNA]</scope>
</reference>
<name>HIS8_THIRO</name>
<feature type="chain" id="PRO_0000153473" description="Histidinol-phosphate aminotransferase">
    <location>
        <begin position="1"/>
        <end position="189" status="greater than"/>
    </location>
</feature>
<feature type="non-terminal residue">
    <location>
        <position position="189"/>
    </location>
</feature>
<evidence type="ECO:0000250" key="1"/>
<evidence type="ECO:0000305" key="2"/>
<keyword id="KW-0028">Amino-acid biosynthesis</keyword>
<keyword id="KW-0032">Aminotransferase</keyword>
<keyword id="KW-0368">Histidine biosynthesis</keyword>
<keyword id="KW-0663">Pyridoxal phosphate</keyword>
<keyword id="KW-0808">Transferase</keyword>
<dbReference type="EC" id="2.6.1.9"/>
<dbReference type="EMBL" id="AF235018">
    <property type="protein sequence ID" value="AAF44660.1"/>
    <property type="molecule type" value="Genomic_DNA"/>
</dbReference>
<dbReference type="SMR" id="Q9L6I2"/>
<dbReference type="STRING" id="1058.SAMN05421783_110112"/>
<dbReference type="UniPathway" id="UPA00031">
    <property type="reaction ID" value="UER00012"/>
</dbReference>
<dbReference type="GO" id="GO:0004400">
    <property type="term" value="F:histidinol-phosphate transaminase activity"/>
    <property type="evidence" value="ECO:0007669"/>
    <property type="project" value="UniProtKB-EC"/>
</dbReference>
<dbReference type="GO" id="GO:0030170">
    <property type="term" value="F:pyridoxal phosphate binding"/>
    <property type="evidence" value="ECO:0007669"/>
    <property type="project" value="InterPro"/>
</dbReference>
<dbReference type="GO" id="GO:0000105">
    <property type="term" value="P:L-histidine biosynthetic process"/>
    <property type="evidence" value="ECO:0007669"/>
    <property type="project" value="UniProtKB-UniPathway"/>
</dbReference>
<dbReference type="CDD" id="cd00609">
    <property type="entry name" value="AAT_like"/>
    <property type="match status" value="1"/>
</dbReference>
<dbReference type="Gene3D" id="3.90.1150.10">
    <property type="entry name" value="Aspartate Aminotransferase, domain 1"/>
    <property type="match status" value="1"/>
</dbReference>
<dbReference type="Gene3D" id="3.40.640.10">
    <property type="entry name" value="Type I PLP-dependent aspartate aminotransferase-like (Major domain)"/>
    <property type="match status" value="1"/>
</dbReference>
<dbReference type="InterPro" id="IPR004839">
    <property type="entry name" value="Aminotransferase_I/II_large"/>
</dbReference>
<dbReference type="InterPro" id="IPR015424">
    <property type="entry name" value="PyrdxlP-dep_Trfase"/>
</dbReference>
<dbReference type="InterPro" id="IPR015421">
    <property type="entry name" value="PyrdxlP-dep_Trfase_major"/>
</dbReference>
<dbReference type="InterPro" id="IPR015422">
    <property type="entry name" value="PyrdxlP-dep_Trfase_small"/>
</dbReference>
<dbReference type="PANTHER" id="PTHR42885:SF2">
    <property type="entry name" value="HISTIDINOL-PHOSPHATE AMINOTRANSFERASE"/>
    <property type="match status" value="1"/>
</dbReference>
<dbReference type="PANTHER" id="PTHR42885">
    <property type="entry name" value="HISTIDINOL-PHOSPHATE AMINOTRANSFERASE-RELATED"/>
    <property type="match status" value="1"/>
</dbReference>
<dbReference type="Pfam" id="PF00155">
    <property type="entry name" value="Aminotran_1_2"/>
    <property type="match status" value="1"/>
</dbReference>
<dbReference type="SUPFAM" id="SSF53383">
    <property type="entry name" value="PLP-dependent transferases"/>
    <property type="match status" value="1"/>
</dbReference>
<protein>
    <recommendedName>
        <fullName>Histidinol-phosphate aminotransferase</fullName>
        <ecNumber>2.6.1.9</ecNumber>
    </recommendedName>
    <alternativeName>
        <fullName>Imidazole acetol-phosphate transaminase</fullName>
    </alternativeName>
</protein>
<accession>Q9L6I2</accession>
<comment type="catalytic activity">
    <reaction>
        <text>L-histidinol phosphate + 2-oxoglutarate = 3-(imidazol-4-yl)-2-oxopropyl phosphate + L-glutamate</text>
        <dbReference type="Rhea" id="RHEA:23744"/>
        <dbReference type="ChEBI" id="CHEBI:16810"/>
        <dbReference type="ChEBI" id="CHEBI:29985"/>
        <dbReference type="ChEBI" id="CHEBI:57766"/>
        <dbReference type="ChEBI" id="CHEBI:57980"/>
        <dbReference type="EC" id="2.6.1.9"/>
    </reaction>
</comment>
<comment type="cofactor">
    <cofactor evidence="1">
        <name>pyridoxal 5'-phosphate</name>
        <dbReference type="ChEBI" id="CHEBI:597326"/>
    </cofactor>
</comment>
<comment type="pathway">
    <text>Amino-acid biosynthesis; L-histidine biosynthesis; L-histidine from 5-phospho-alpha-D-ribose 1-diphosphate: step 7/9.</text>
</comment>
<comment type="subunit">
    <text evidence="1">Homodimer.</text>
</comment>
<comment type="similarity">
    <text evidence="2">Belongs to the class-II pyridoxal-phosphate-dependent aminotransferase family. Histidinol-phosphate aminotransferase subfamily.</text>
</comment>